<feature type="chain" id="PRO_0000057995" description="Kinetochore protein NUF2">
    <location>
        <begin position="1"/>
        <end position="451"/>
    </location>
</feature>
<feature type="coiled-coil region" evidence="1">
    <location>
        <begin position="153"/>
        <end position="291"/>
    </location>
</feature>
<feature type="coiled-coil region" evidence="1">
    <location>
        <begin position="341"/>
        <end position="371"/>
    </location>
</feature>
<feature type="coiled-coil region" evidence="1">
    <location>
        <begin position="398"/>
        <end position="432"/>
    </location>
</feature>
<feature type="mutagenesis site" description="Temperature-sensitive." evidence="6">
    <original>T</original>
    <variation>P</variation>
    <location>
        <position position="338"/>
    </location>
</feature>
<feature type="mutagenesis site" description="Temperature-sensitive." evidence="6">
    <original>I</original>
    <variation>K</variation>
    <location>
        <position position="340"/>
    </location>
</feature>
<feature type="mutagenesis site" description="Temperature-sensitive." evidence="6">
    <original>Y</original>
    <variation>C</variation>
    <location>
        <position position="383"/>
    </location>
</feature>
<feature type="mutagenesis site" description="Temperature-sensitive." evidence="6">
    <original>L</original>
    <variation>S</variation>
    <location>
        <position position="410"/>
    </location>
</feature>
<feature type="mutagenesis site" description="Temperature-sensitive." evidence="6">
    <original>K</original>
    <variation>I</variation>
    <location>
        <position position="441"/>
    </location>
</feature>
<feature type="mutagenesis site" description="Temperature-sensitive." evidence="6">
    <original>M</original>
    <variation>L</variation>
    <location>
        <position position="446"/>
    </location>
</feature>
<feature type="sequence conflict" description="In Ref. 5; AAT92974." evidence="7" ref="5">
    <original>N</original>
    <variation>Y</variation>
    <location>
        <position position="240"/>
    </location>
</feature>
<feature type="strand" evidence="9">
    <location>
        <begin position="6"/>
        <end position="8"/>
    </location>
</feature>
<feature type="helix" evidence="9">
    <location>
        <begin position="13"/>
        <end position="22"/>
    </location>
</feature>
<feature type="strand" evidence="10">
    <location>
        <begin position="23"/>
        <end position="25"/>
    </location>
</feature>
<feature type="helix" evidence="9">
    <location>
        <begin position="30"/>
        <end position="34"/>
    </location>
</feature>
<feature type="helix" evidence="9">
    <location>
        <begin position="40"/>
        <end position="53"/>
    </location>
</feature>
<feature type="helix" evidence="9">
    <location>
        <begin position="57"/>
        <end position="65"/>
    </location>
</feature>
<feature type="strand" evidence="8">
    <location>
        <begin position="75"/>
        <end position="77"/>
    </location>
</feature>
<feature type="helix" evidence="9">
    <location>
        <begin position="79"/>
        <end position="99"/>
    </location>
</feature>
<feature type="turn" evidence="9">
    <location>
        <begin position="100"/>
        <end position="102"/>
    </location>
</feature>
<feature type="helix" evidence="9">
    <location>
        <begin position="108"/>
        <end position="112"/>
    </location>
</feature>
<feature type="helix" evidence="9">
    <location>
        <begin position="116"/>
        <end position="136"/>
    </location>
</feature>
<feature type="helix" evidence="9">
    <location>
        <begin position="137"/>
        <end position="140"/>
    </location>
</feature>
<feature type="helix" evidence="9">
    <location>
        <begin position="141"/>
        <end position="154"/>
    </location>
</feature>
<feature type="helix" evidence="9">
    <location>
        <begin position="156"/>
        <end position="161"/>
    </location>
</feature>
<feature type="helix" evidence="9">
    <location>
        <begin position="164"/>
        <end position="172"/>
    </location>
</feature>
<feature type="helix" evidence="9">
    <location>
        <begin position="423"/>
        <end position="448"/>
    </location>
</feature>
<accession>P33895</accession>
<accession>D6W1Z8</accession>
<accession>Q6B1X5</accession>
<keyword id="KW-0002">3D-structure</keyword>
<keyword id="KW-0131">Cell cycle</keyword>
<keyword id="KW-0132">Cell division</keyword>
<keyword id="KW-0137">Centromere</keyword>
<keyword id="KW-0158">Chromosome</keyword>
<keyword id="KW-0175">Coiled coil</keyword>
<keyword id="KW-0995">Kinetochore</keyword>
<keyword id="KW-0498">Mitosis</keyword>
<keyword id="KW-0539">Nucleus</keyword>
<keyword id="KW-1185">Reference proteome</keyword>
<reference key="1">
    <citation type="journal article" date="1994" name="J. Cell Biol.">
        <title>Nuf2, a spindle pole body-associated protein required for nuclear division in yeast.</title>
        <authorList>
            <person name="Osborne M.A."/>
            <person name="Schlenstedt G."/>
            <person name="Jinks T."/>
            <person name="Silver P.A."/>
        </authorList>
    </citation>
    <scope>NUCLEOTIDE SEQUENCE [GENOMIC DNA]</scope>
    <scope>MUTAGENESIS OF THR-338; ILE-340; TYR-383; LEU-410; LYS-441 AND MET-446</scope>
    <source>
        <strain>W303A</strain>
    </source>
</reference>
<reference key="2">
    <citation type="journal article" date="1997" name="Yeast">
        <title>Sequence analysis of a 33.2 kb segment from the left arm of yeast chromosome XV reveals eight known genes and ten new open reading frames including homologues of ABC transporters, inositol phosphatases and human expressed sequence tags.</title>
        <authorList>
            <person name="Tzermia M."/>
            <person name="Katsoulou C."/>
            <person name="Alexandraki D."/>
        </authorList>
    </citation>
    <scope>NUCLEOTIDE SEQUENCE [GENOMIC DNA]</scope>
</reference>
<reference key="3">
    <citation type="journal article" date="1997" name="Nature">
        <title>The nucleotide sequence of Saccharomyces cerevisiae chromosome XV.</title>
        <authorList>
            <person name="Dujon B."/>
            <person name="Albermann K."/>
            <person name="Aldea M."/>
            <person name="Alexandraki D."/>
            <person name="Ansorge W."/>
            <person name="Arino J."/>
            <person name="Benes V."/>
            <person name="Bohn C."/>
            <person name="Bolotin-Fukuhara M."/>
            <person name="Bordonne R."/>
            <person name="Boyer J."/>
            <person name="Camasses A."/>
            <person name="Casamayor A."/>
            <person name="Casas C."/>
            <person name="Cheret G."/>
            <person name="Cziepluch C."/>
            <person name="Daignan-Fornier B."/>
            <person name="Dang V.-D."/>
            <person name="de Haan M."/>
            <person name="Delius H."/>
            <person name="Durand P."/>
            <person name="Fairhead C."/>
            <person name="Feldmann H."/>
            <person name="Gaillon L."/>
            <person name="Galisson F."/>
            <person name="Gamo F.-J."/>
            <person name="Gancedo C."/>
            <person name="Goffeau A."/>
            <person name="Goulding S.E."/>
            <person name="Grivell L.A."/>
            <person name="Habbig B."/>
            <person name="Hand N.J."/>
            <person name="Hani J."/>
            <person name="Hattenhorst U."/>
            <person name="Hebling U."/>
            <person name="Hernando Y."/>
            <person name="Herrero E."/>
            <person name="Heumann K."/>
            <person name="Hiesel R."/>
            <person name="Hilger F."/>
            <person name="Hofmann B."/>
            <person name="Hollenberg C.P."/>
            <person name="Hughes B."/>
            <person name="Jauniaux J.-C."/>
            <person name="Kalogeropoulos A."/>
            <person name="Katsoulou C."/>
            <person name="Kordes E."/>
            <person name="Lafuente M.J."/>
            <person name="Landt O."/>
            <person name="Louis E.J."/>
            <person name="Maarse A.C."/>
            <person name="Madania A."/>
            <person name="Mannhaupt G."/>
            <person name="Marck C."/>
            <person name="Martin R.P."/>
            <person name="Mewes H.-W."/>
            <person name="Michaux G."/>
            <person name="Paces V."/>
            <person name="Parle-McDermott A.G."/>
            <person name="Pearson B.M."/>
            <person name="Perrin A."/>
            <person name="Pettersson B."/>
            <person name="Poch O."/>
            <person name="Pohl T.M."/>
            <person name="Poirey R."/>
            <person name="Portetelle D."/>
            <person name="Pujol A."/>
            <person name="Purnelle B."/>
            <person name="Ramezani Rad M."/>
            <person name="Rechmann S."/>
            <person name="Schwager C."/>
            <person name="Schweizer M."/>
            <person name="Sor F."/>
            <person name="Sterky F."/>
            <person name="Tarassov I.A."/>
            <person name="Teodoru C."/>
            <person name="Tettelin H."/>
            <person name="Thierry A."/>
            <person name="Tobiasch E."/>
            <person name="Tzermia M."/>
            <person name="Uhlen M."/>
            <person name="Unseld M."/>
            <person name="Valens M."/>
            <person name="Vandenbol M."/>
            <person name="Vetter I."/>
            <person name="Vlcek C."/>
            <person name="Voet M."/>
            <person name="Volckaert G."/>
            <person name="Voss H."/>
            <person name="Wambutt R."/>
            <person name="Wedler H."/>
            <person name="Wiemann S."/>
            <person name="Winsor B."/>
            <person name="Wolfe K.H."/>
            <person name="Zollner A."/>
            <person name="Zumstein E."/>
            <person name="Kleine K."/>
        </authorList>
    </citation>
    <scope>NUCLEOTIDE SEQUENCE [LARGE SCALE GENOMIC DNA]</scope>
    <source>
        <strain>ATCC 204508 / S288c</strain>
    </source>
</reference>
<reference key="4">
    <citation type="journal article" date="2014" name="G3 (Bethesda)">
        <title>The reference genome sequence of Saccharomyces cerevisiae: Then and now.</title>
        <authorList>
            <person name="Engel S.R."/>
            <person name="Dietrich F.S."/>
            <person name="Fisk D.G."/>
            <person name="Binkley G."/>
            <person name="Balakrishnan R."/>
            <person name="Costanzo M.C."/>
            <person name="Dwight S.S."/>
            <person name="Hitz B.C."/>
            <person name="Karra K."/>
            <person name="Nash R.S."/>
            <person name="Weng S."/>
            <person name="Wong E.D."/>
            <person name="Lloyd P."/>
            <person name="Skrzypek M.S."/>
            <person name="Miyasato S.R."/>
            <person name="Simison M."/>
            <person name="Cherry J.M."/>
        </authorList>
    </citation>
    <scope>GENOME REANNOTATION</scope>
    <source>
        <strain>ATCC 204508 / S288c</strain>
    </source>
</reference>
<reference key="5">
    <citation type="journal article" date="2007" name="Genome Res.">
        <title>Approaching a complete repository of sequence-verified protein-encoding clones for Saccharomyces cerevisiae.</title>
        <authorList>
            <person name="Hu Y."/>
            <person name="Rolfs A."/>
            <person name="Bhullar B."/>
            <person name="Murthy T.V.S."/>
            <person name="Zhu C."/>
            <person name="Berger M.F."/>
            <person name="Camargo A.A."/>
            <person name="Kelley F."/>
            <person name="McCarron S."/>
            <person name="Jepson D."/>
            <person name="Richardson A."/>
            <person name="Raphael J."/>
            <person name="Moreira D."/>
            <person name="Taycher E."/>
            <person name="Zuo D."/>
            <person name="Mohr S."/>
            <person name="Kane M.F."/>
            <person name="Williamson J."/>
            <person name="Simpson A.J.G."/>
            <person name="Bulyk M.L."/>
            <person name="Harlow E."/>
            <person name="Marsischky G."/>
            <person name="Kolodner R.D."/>
            <person name="LaBaer J."/>
        </authorList>
    </citation>
    <scope>NUCLEOTIDE SEQUENCE [GENOMIC DNA]</scope>
    <source>
        <strain>ATCC 204508 / S288c</strain>
    </source>
</reference>
<reference key="6">
    <citation type="journal article" date="2001" name="EMBO J.">
        <title>The budding yeast proteins Spc24p and Spc25p interact with Ndc80p and Nuf2p at the kinetochore and are important for kinetochore clustering and checkpoint control.</title>
        <authorList>
            <person name="Janke C."/>
            <person name="Ortiz J."/>
            <person name="Lechner J."/>
            <person name="Shevchenko A."/>
            <person name="Shevchenko A."/>
            <person name="Magiera M.M."/>
            <person name="Schramm C."/>
            <person name="Schiebel E."/>
        </authorList>
    </citation>
    <scope>SUBCELLULAR LOCATION</scope>
    <scope>INTERACTION WITH SPC24 AND SPC25</scope>
</reference>
<reference key="7">
    <citation type="journal article" date="2001" name="J. Cell Biol.">
        <title>The Ndc80p complex from Saccharomyces cerevisiae contains conserved centromere components and has a function in chromosome segregation.</title>
        <authorList>
            <person name="Wigge P.A."/>
            <person name="Kilmartin J.V."/>
        </authorList>
    </citation>
    <scope>FUNCTION OF THE NDC80 COMPLEX</scope>
    <scope>SUBCELLULAR LOCATION</scope>
    <scope>IDENTIFICATION IN THE NDC80 COMPLEX</scope>
</reference>
<reference key="8">
    <citation type="journal article" date="2003" name="Genes Dev.">
        <title>The highly conserved Ndc80 complex is required for kinetochore assembly, chromosome congression, and spindle checkpoint activity.</title>
        <authorList>
            <person name="McCleland M.L."/>
            <person name="Gardner R.D."/>
            <person name="Kallio M.J."/>
            <person name="Daum J.R."/>
            <person name="Gorbsky G.J."/>
            <person name="Burke D.J."/>
            <person name="Stukenberg P.T."/>
        </authorList>
    </citation>
    <scope>FUNCTION OF THE NDC80 COMPLEX</scope>
</reference>
<reference key="9">
    <citation type="journal article" date="2003" name="Nature">
        <title>Global analysis of protein expression in yeast.</title>
        <authorList>
            <person name="Ghaemmaghami S."/>
            <person name="Huh W.-K."/>
            <person name="Bower K."/>
            <person name="Howson R.W."/>
            <person name="Belle A."/>
            <person name="Dephoure N."/>
            <person name="O'Shea E.K."/>
            <person name="Weissman J.S."/>
        </authorList>
    </citation>
    <scope>LEVEL OF PROTEIN EXPRESSION [LARGE SCALE ANALYSIS]</scope>
</reference>
<reference key="10">
    <citation type="journal article" date="2004" name="Mol. Biol. Cell">
        <title>The fission yeast kinetochore component Spc7 associates with the EB1 family member Mal3 and is required for kinetochore-spindle association.</title>
        <authorList>
            <person name="Kerres A."/>
            <person name="Vietmeier-Decker C."/>
            <person name="Ortiz J."/>
            <person name="Karig I."/>
            <person name="Beuter C."/>
            <person name="Hegemann J."/>
            <person name="Lechner J."/>
            <person name="Fleig U."/>
        </authorList>
    </citation>
    <scope>IDENTIFICATION IN THE NDC80 COMPLEX</scope>
</reference>
<reference key="11">
    <citation type="journal article" date="2005" name="Proc. Natl. Acad. Sci. U.S.A.">
        <title>Molecular organization of the Ndc80 complex, an essential kinetochore component.</title>
        <authorList>
            <person name="Wei R.R."/>
            <person name="Sorger P.K."/>
            <person name="Harrison S.C."/>
        </authorList>
    </citation>
    <scope>3D-STRUCTURE MODELING OF THE NDC80 COMPLEX</scope>
</reference>
<evidence type="ECO:0000255" key="1"/>
<evidence type="ECO:0000269" key="2">
    <source>
    </source>
</evidence>
<evidence type="ECO:0000269" key="3">
    <source>
    </source>
</evidence>
<evidence type="ECO:0000269" key="4">
    <source>
    </source>
</evidence>
<evidence type="ECO:0000269" key="5">
    <source>
    </source>
</evidence>
<evidence type="ECO:0000269" key="6">
    <source>
    </source>
</evidence>
<evidence type="ECO:0000305" key="7"/>
<evidence type="ECO:0007829" key="8">
    <source>
        <dbReference type="PDB" id="5TCS"/>
    </source>
</evidence>
<evidence type="ECO:0007829" key="9">
    <source>
        <dbReference type="PDB" id="7KDF"/>
    </source>
</evidence>
<evidence type="ECO:0007829" key="10">
    <source>
        <dbReference type="PDB" id="8V10"/>
    </source>
</evidence>
<sequence length="451" mass="52973">MSRNQDVFPILDLQELVICLQSCDFALATQENISRPTSDYMVTLYKQIIENFMGISVESLLNSSNQETGDGHLQEENENIYLDTLNVLVLNKICFKFFENIGVQDFNMTDLYKPEAQRTQRLLSAVVNYARFREERMFDCNSFILQMESLLGQLRSKFDDYNLIQQQLKQYEDVDGDNIPDEQELQKLEEQNKELEIQLKKLTKIQETLSIDYNDYKISKQSIFKDLEALSFQIVELESNRDKLIKISNTDMEELSEGIKELNDLLIQRKKTLDDLTAQQKNLQDTVTTFETIISELYDVLRIISSEVQESNRTETELVGLKQNLINNKLKLMNVLETGIMYKLEILQEQLDLQLKNLEKLSQDTKEESRLNDTKLMDLQIKYENEIKPKIDKTDIFIQEELISGKINKLNDEIKQLQKDFEVEVKEIEIEYSLLSGHINKYMNEMLEYMQ</sequence>
<proteinExistence type="evidence at protein level"/>
<organism>
    <name type="scientific">Saccharomyces cerevisiae (strain ATCC 204508 / S288c)</name>
    <name type="common">Baker's yeast</name>
    <dbReference type="NCBI Taxonomy" id="559292"/>
    <lineage>
        <taxon>Eukaryota</taxon>
        <taxon>Fungi</taxon>
        <taxon>Dikarya</taxon>
        <taxon>Ascomycota</taxon>
        <taxon>Saccharomycotina</taxon>
        <taxon>Saccharomycetes</taxon>
        <taxon>Saccharomycetales</taxon>
        <taxon>Saccharomycetaceae</taxon>
        <taxon>Saccharomyces</taxon>
    </lineage>
</organism>
<name>NUF2_YEAST</name>
<comment type="function">
    <text evidence="2 3">Acts as a component of the essential kinetochore-associated NDC80 complex, which is involved in chromosome segregation and spindle checkpoint activity.</text>
</comment>
<comment type="subunit">
    <text evidence="2 5">Component of the NDC80 complex, which consists of TID3/NDC80, NUF2, SPC24 and SPC25. The NDC80 complex is formed by two subcomplexes, TID3/NDC80-NUF2 and SPC24-SPC25, which are joined end-to-end through their coiled-coil domains. It has a rod-like structure with a length of 570 Angstroms and globular domains at either end. The TID3/NDC80-NUF2 globular domains are probably directed to microtubules, the SPC24-SPC25 globular domains to the centromere.</text>
</comment>
<comment type="interaction">
    <interactant intactId="EBI-12377">
        <id>P33895</id>
    </interactant>
    <interactant intactId="EBI-23036">
        <id>P43618</id>
        <label>CNN1</label>
    </interactant>
    <organismsDiffer>false</organismsDiffer>
    <experiments>2</experiments>
</comment>
<comment type="interaction">
    <interactant intactId="EBI-12377">
        <id>P33895</id>
    </interactant>
    <interactant intactId="EBI-25247">
        <id>P40460</id>
        <label>NDC80</label>
    </interactant>
    <organismsDiffer>false</organismsDiffer>
    <experiments>16</experiments>
</comment>
<comment type="interaction">
    <interactant intactId="EBI-12377">
        <id>P33895</id>
    </interactant>
    <interactant intactId="EBI-27228">
        <id>Q04477</id>
        <label>SPC24</label>
    </interactant>
    <organismsDiffer>false</organismsDiffer>
    <experiments>9</experiments>
</comment>
<comment type="interaction">
    <interactant intactId="EBI-12377">
        <id>P33895</id>
    </interactant>
    <interactant intactId="EBI-22458">
        <id>P40014</id>
        <label>SPC25</label>
    </interactant>
    <organismsDiffer>false</organismsDiffer>
    <experiments>6</experiments>
</comment>
<comment type="subcellular location">
    <subcellularLocation>
        <location>Nucleus</location>
    </subcellularLocation>
    <subcellularLocation>
        <location>Chromosome</location>
        <location>Centromere</location>
        <location>Kinetochore</location>
    </subcellularLocation>
    <text>Associated with kinetochores.</text>
</comment>
<comment type="miscellaneous">
    <text evidence="4">Present with 1550 molecules/cell in log phase SD medium.</text>
</comment>
<comment type="similarity">
    <text evidence="7">Belongs to the NUF2 family.</text>
</comment>
<protein>
    <recommendedName>
        <fullName>Kinetochore protein NUF2</fullName>
    </recommendedName>
</protein>
<dbReference type="EMBL" id="X72225">
    <property type="protein sequence ID" value="CAA51028.1"/>
    <property type="molecule type" value="Genomic_DNA"/>
</dbReference>
<dbReference type="EMBL" id="Z74811">
    <property type="protein sequence ID" value="CAA99079.1"/>
    <property type="molecule type" value="Genomic_DNA"/>
</dbReference>
<dbReference type="EMBL" id="AY692955">
    <property type="protein sequence ID" value="AAT92974.1"/>
    <property type="molecule type" value="Genomic_DNA"/>
</dbReference>
<dbReference type="EMBL" id="BK006948">
    <property type="protein sequence ID" value="DAA10714.1"/>
    <property type="molecule type" value="Genomic_DNA"/>
</dbReference>
<dbReference type="PIR" id="A53910">
    <property type="entry name" value="A53910"/>
</dbReference>
<dbReference type="RefSeq" id="NP_014572.1">
    <property type="nucleotide sequence ID" value="NM_001183324.1"/>
</dbReference>
<dbReference type="PDB" id="5TCS">
    <property type="method" value="X-ray"/>
    <property type="resolution" value="2.83 A"/>
    <property type="chains" value="B=2-153, B=407-451"/>
</dbReference>
<dbReference type="PDB" id="5TD8">
    <property type="method" value="X-ray"/>
    <property type="resolution" value="7.53 A"/>
    <property type="chains" value="B=1-153, B=407-451"/>
</dbReference>
<dbReference type="PDB" id="7KDF">
    <property type="method" value="X-ray"/>
    <property type="resolution" value="2.72 A"/>
    <property type="chains" value="B=2-172"/>
</dbReference>
<dbReference type="PDB" id="8G0Q">
    <property type="method" value="X-ray"/>
    <property type="resolution" value="3.22 A"/>
    <property type="chains" value="B/D=2-172"/>
</dbReference>
<dbReference type="PDB" id="8Q84">
    <property type="method" value="EM"/>
    <property type="resolution" value="3.15 A"/>
    <property type="chains" value="B/G=1-451"/>
</dbReference>
<dbReference type="PDB" id="8Q85">
    <property type="method" value="EM"/>
    <property type="resolution" value="3.97 A"/>
    <property type="chains" value="G=1-451"/>
</dbReference>
<dbReference type="PDB" id="8QAU">
    <property type="method" value="EM"/>
    <property type="resolution" value="3.54 A"/>
    <property type="chains" value="B=1-451"/>
</dbReference>
<dbReference type="PDB" id="8V10">
    <property type="method" value="X-ray"/>
    <property type="resolution" value="3.02 A"/>
    <property type="chains" value="B=2-172"/>
</dbReference>
<dbReference type="PDB" id="8V11">
    <property type="method" value="X-ray"/>
    <property type="resolution" value="3.95 A"/>
    <property type="chains" value="B/F=241-451"/>
</dbReference>
<dbReference type="PDBsum" id="5TCS"/>
<dbReference type="PDBsum" id="5TD8"/>
<dbReference type="PDBsum" id="7KDF"/>
<dbReference type="PDBsum" id="8G0Q"/>
<dbReference type="PDBsum" id="8Q84"/>
<dbReference type="PDBsum" id="8Q85"/>
<dbReference type="PDBsum" id="8QAU"/>
<dbReference type="PDBsum" id="8V10"/>
<dbReference type="PDBsum" id="8V11"/>
<dbReference type="EMDB" id="EMD-18246"/>
<dbReference type="EMDB" id="EMD-18247"/>
<dbReference type="EMDB" id="EMD-18304"/>
<dbReference type="SMR" id="P33895"/>
<dbReference type="BioGRID" id="34332">
    <property type="interactions" value="358"/>
</dbReference>
<dbReference type="ComplexPortal" id="CPX-548">
    <property type="entry name" value="NDC80 complex"/>
</dbReference>
<dbReference type="DIP" id="DIP-1481N"/>
<dbReference type="FunCoup" id="P33895">
    <property type="interactions" value="449"/>
</dbReference>
<dbReference type="IntAct" id="P33895">
    <property type="interactions" value="32"/>
</dbReference>
<dbReference type="MINT" id="P33895"/>
<dbReference type="STRING" id="4932.YOL069W"/>
<dbReference type="iPTMnet" id="P33895"/>
<dbReference type="PaxDb" id="4932-YOL069W"/>
<dbReference type="PeptideAtlas" id="P33895"/>
<dbReference type="EnsemblFungi" id="YOL069W_mRNA">
    <property type="protein sequence ID" value="YOL069W"/>
    <property type="gene ID" value="YOL069W"/>
</dbReference>
<dbReference type="GeneID" id="854085"/>
<dbReference type="KEGG" id="sce:YOL069W"/>
<dbReference type="AGR" id="SGD:S000005430"/>
<dbReference type="SGD" id="S000005430">
    <property type="gene designation" value="NUF2"/>
</dbReference>
<dbReference type="VEuPathDB" id="FungiDB:YOL069W"/>
<dbReference type="eggNOG" id="KOG4438">
    <property type="taxonomic scope" value="Eukaryota"/>
</dbReference>
<dbReference type="GeneTree" id="ENSGT00390000004199"/>
<dbReference type="HOGENOM" id="CLU_025461_2_0_1"/>
<dbReference type="InParanoid" id="P33895"/>
<dbReference type="OMA" id="YLKMEAH"/>
<dbReference type="OrthoDB" id="8194677at2759"/>
<dbReference type="BioCyc" id="YEAST:G3O-33474-MONOMER"/>
<dbReference type="BioGRID-ORCS" id="854085">
    <property type="hits" value="2 hits in 10 CRISPR screens"/>
</dbReference>
<dbReference type="CD-CODE" id="876000F7">
    <property type="entry name" value="Centrosome"/>
</dbReference>
<dbReference type="PRO" id="PR:P33895"/>
<dbReference type="Proteomes" id="UP000002311">
    <property type="component" value="Chromosome XV"/>
</dbReference>
<dbReference type="RNAct" id="P33895">
    <property type="molecule type" value="protein"/>
</dbReference>
<dbReference type="GO" id="GO:0000779">
    <property type="term" value="C:condensed chromosome, centromeric region"/>
    <property type="evidence" value="ECO:0000314"/>
    <property type="project" value="SGD"/>
</dbReference>
<dbReference type="GO" id="GO:0000776">
    <property type="term" value="C:kinetochore"/>
    <property type="evidence" value="ECO:0000314"/>
    <property type="project" value="SGD"/>
</dbReference>
<dbReference type="GO" id="GO:0031262">
    <property type="term" value="C:Ndc80 complex"/>
    <property type="evidence" value="ECO:0000314"/>
    <property type="project" value="SGD"/>
</dbReference>
<dbReference type="GO" id="GO:0005634">
    <property type="term" value="C:nucleus"/>
    <property type="evidence" value="ECO:0007669"/>
    <property type="project" value="UniProtKB-SubCell"/>
</dbReference>
<dbReference type="GO" id="GO:0000940">
    <property type="term" value="C:outer kinetochore"/>
    <property type="evidence" value="ECO:0000314"/>
    <property type="project" value="UniProtKB"/>
</dbReference>
<dbReference type="GO" id="GO:0005876">
    <property type="term" value="C:spindle microtubule"/>
    <property type="evidence" value="ECO:0000314"/>
    <property type="project" value="SGD"/>
</dbReference>
<dbReference type="GO" id="GO:0005816">
    <property type="term" value="C:spindle pole body"/>
    <property type="evidence" value="ECO:0000314"/>
    <property type="project" value="SGD"/>
</dbReference>
<dbReference type="GO" id="GO:0044877">
    <property type="term" value="F:protein-containing complex binding"/>
    <property type="evidence" value="ECO:0000318"/>
    <property type="project" value="GO_Central"/>
</dbReference>
<dbReference type="GO" id="GO:0051315">
    <property type="term" value="P:attachment of mitotic spindle microtubules to kinetochore"/>
    <property type="evidence" value="ECO:0000318"/>
    <property type="project" value="GO_Central"/>
</dbReference>
<dbReference type="GO" id="GO:0051301">
    <property type="term" value="P:cell division"/>
    <property type="evidence" value="ECO:0007669"/>
    <property type="project" value="UniProtKB-KW"/>
</dbReference>
<dbReference type="GO" id="GO:0007059">
    <property type="term" value="P:chromosome segregation"/>
    <property type="evidence" value="ECO:0000316"/>
    <property type="project" value="SGD"/>
</dbReference>
<dbReference type="GO" id="GO:0051383">
    <property type="term" value="P:kinetochore organization"/>
    <property type="evidence" value="ECO:0000318"/>
    <property type="project" value="GO_Central"/>
</dbReference>
<dbReference type="GO" id="GO:0045132">
    <property type="term" value="P:meiotic chromosome segregation"/>
    <property type="evidence" value="ECO:0000318"/>
    <property type="project" value="GO_Central"/>
</dbReference>
<dbReference type="GO" id="GO:0007052">
    <property type="term" value="P:mitotic spindle organization"/>
    <property type="evidence" value="ECO:0000318"/>
    <property type="project" value="GO_Central"/>
</dbReference>
<dbReference type="FunFam" id="1.10.418.60:FF:000004">
    <property type="entry name" value="Nuf2p"/>
    <property type="match status" value="1"/>
</dbReference>
<dbReference type="Gene3D" id="1.20.5.340">
    <property type="match status" value="1"/>
</dbReference>
<dbReference type="Gene3D" id="1.10.418.60">
    <property type="entry name" value="Ncd80 complex, Nuf2 subunit"/>
    <property type="match status" value="1"/>
</dbReference>
<dbReference type="InterPro" id="IPR005549">
    <property type="entry name" value="Kinetochore_Nuf2_N"/>
</dbReference>
<dbReference type="InterPro" id="IPR038275">
    <property type="entry name" value="Nuf2_N_sf"/>
</dbReference>
<dbReference type="PANTHER" id="PTHR21650:SF2">
    <property type="entry name" value="KINETOCHORE PROTEIN NUF2"/>
    <property type="match status" value="1"/>
</dbReference>
<dbReference type="PANTHER" id="PTHR21650">
    <property type="entry name" value="MEMBRALIN/KINETOCHORE PROTEIN NUF2"/>
    <property type="match status" value="1"/>
</dbReference>
<dbReference type="Pfam" id="PF03800">
    <property type="entry name" value="Nuf2"/>
    <property type="match status" value="1"/>
</dbReference>
<gene>
    <name type="primary">NUF2</name>
    <name type="ordered locus">YOL069W</name>
</gene>